<dbReference type="EMBL" id="X99772">
    <property type="protein sequence ID" value="CAA68111.1"/>
    <property type="molecule type" value="Genomic_DNA"/>
</dbReference>
<dbReference type="PIR" id="T11825">
    <property type="entry name" value="T11825"/>
</dbReference>
<dbReference type="RefSeq" id="NP_008618.1">
    <property type="nucleotide sequence ID" value="NC_002081.1"/>
</dbReference>
<dbReference type="SMR" id="P55778"/>
<dbReference type="GeneID" id="808448"/>
<dbReference type="CTD" id="4508"/>
<dbReference type="OrthoDB" id="5976622at2759"/>
<dbReference type="Proteomes" id="UP000694546">
    <property type="component" value="Unplaced"/>
</dbReference>
<dbReference type="GO" id="GO:0005743">
    <property type="term" value="C:mitochondrial inner membrane"/>
    <property type="evidence" value="ECO:0007669"/>
    <property type="project" value="UniProtKB-SubCell"/>
</dbReference>
<dbReference type="GO" id="GO:0045259">
    <property type="term" value="C:proton-transporting ATP synthase complex"/>
    <property type="evidence" value="ECO:0000250"/>
    <property type="project" value="UniProtKB"/>
</dbReference>
<dbReference type="GO" id="GO:0015252">
    <property type="term" value="F:proton channel activity"/>
    <property type="evidence" value="ECO:0000250"/>
    <property type="project" value="UniProtKB"/>
</dbReference>
<dbReference type="GO" id="GO:0046933">
    <property type="term" value="F:proton-transporting ATP synthase activity, rotational mechanism"/>
    <property type="evidence" value="ECO:0007669"/>
    <property type="project" value="TreeGrafter"/>
</dbReference>
<dbReference type="GO" id="GO:0015986">
    <property type="term" value="P:proton motive force-driven ATP synthesis"/>
    <property type="evidence" value="ECO:0000250"/>
    <property type="project" value="UniProtKB"/>
</dbReference>
<dbReference type="GO" id="GO:1902600">
    <property type="term" value="P:proton transmembrane transport"/>
    <property type="evidence" value="ECO:0000250"/>
    <property type="project" value="UniProtKB"/>
</dbReference>
<dbReference type="CDD" id="cd00310">
    <property type="entry name" value="ATP-synt_Fo_a_6"/>
    <property type="match status" value="1"/>
</dbReference>
<dbReference type="FunFam" id="1.20.120.220:FF:000004">
    <property type="entry name" value="ATP synthase subunit a"/>
    <property type="match status" value="1"/>
</dbReference>
<dbReference type="Gene3D" id="1.20.120.220">
    <property type="entry name" value="ATP synthase, F0 complex, subunit A"/>
    <property type="match status" value="1"/>
</dbReference>
<dbReference type="InterPro" id="IPR000568">
    <property type="entry name" value="ATP_synth_F0_asu"/>
</dbReference>
<dbReference type="InterPro" id="IPR023011">
    <property type="entry name" value="ATP_synth_F0_asu_AS"/>
</dbReference>
<dbReference type="InterPro" id="IPR045083">
    <property type="entry name" value="ATP_synth_F0_asu_bact/mt"/>
</dbReference>
<dbReference type="InterPro" id="IPR035908">
    <property type="entry name" value="F0_ATP_A_sf"/>
</dbReference>
<dbReference type="NCBIfam" id="TIGR01131">
    <property type="entry name" value="ATP_synt_6_or_A"/>
    <property type="match status" value="1"/>
</dbReference>
<dbReference type="PANTHER" id="PTHR11410">
    <property type="entry name" value="ATP SYNTHASE SUBUNIT A"/>
    <property type="match status" value="1"/>
</dbReference>
<dbReference type="PANTHER" id="PTHR11410:SF0">
    <property type="entry name" value="ATP SYNTHASE SUBUNIT A"/>
    <property type="match status" value="1"/>
</dbReference>
<dbReference type="Pfam" id="PF00119">
    <property type="entry name" value="ATP-synt_A"/>
    <property type="match status" value="1"/>
</dbReference>
<dbReference type="PRINTS" id="PR00123">
    <property type="entry name" value="ATPASEA"/>
</dbReference>
<dbReference type="SUPFAM" id="SSF81336">
    <property type="entry name" value="F1F0 ATP synthase subunit A"/>
    <property type="match status" value="1"/>
</dbReference>
<dbReference type="PROSITE" id="PS00449">
    <property type="entry name" value="ATPASE_A"/>
    <property type="match status" value="1"/>
</dbReference>
<gene>
    <name evidence="1" type="primary">mt-atp6</name>
    <name type="synonym">atp6</name>
    <name type="synonym">atpase6</name>
    <name type="synonym">mtatp6</name>
</gene>
<organism>
    <name type="scientific">Gadus morhua</name>
    <name type="common">Atlantic cod</name>
    <dbReference type="NCBI Taxonomy" id="8049"/>
    <lineage>
        <taxon>Eukaryota</taxon>
        <taxon>Metazoa</taxon>
        <taxon>Chordata</taxon>
        <taxon>Craniata</taxon>
        <taxon>Vertebrata</taxon>
        <taxon>Euteleostomi</taxon>
        <taxon>Actinopterygii</taxon>
        <taxon>Neopterygii</taxon>
        <taxon>Teleostei</taxon>
        <taxon>Neoteleostei</taxon>
        <taxon>Acanthomorphata</taxon>
        <taxon>Zeiogadaria</taxon>
        <taxon>Gadariae</taxon>
        <taxon>Gadiformes</taxon>
        <taxon>Gadoidei</taxon>
        <taxon>Gadidae</taxon>
        <taxon>Gadus</taxon>
    </lineage>
</organism>
<protein>
    <recommendedName>
        <fullName evidence="1">ATP synthase F(0) complex subunit a</fullName>
    </recommendedName>
    <alternativeName>
        <fullName>F-ATPase protein 6</fullName>
    </alternativeName>
    <alternativeName>
        <fullName evidence="1">Proton-conducting channel, ATP synthase F(0) complex subunit a</fullName>
    </alternativeName>
</protein>
<keyword id="KW-0066">ATP synthesis</keyword>
<keyword id="KW-0138">CF(0)</keyword>
<keyword id="KW-0375">Hydrogen ion transport</keyword>
<keyword id="KW-0406">Ion transport</keyword>
<keyword id="KW-0472">Membrane</keyword>
<keyword id="KW-0496">Mitochondrion</keyword>
<keyword id="KW-0999">Mitochondrion inner membrane</keyword>
<keyword id="KW-1185">Reference proteome</keyword>
<keyword id="KW-0812">Transmembrane</keyword>
<keyword id="KW-1133">Transmembrane helix</keyword>
<keyword id="KW-0813">Transport</keyword>
<comment type="function">
    <text evidence="1">Subunit a, of the mitochondrial membrane ATP synthase complex (F(1)F(0) ATP synthase or Complex V) that produces ATP from ADP in the presence of a proton gradient across the membrane which is generated by electron transport complexes of the respiratory chain. ATP synthase complex consist of a soluble F(1) head domain - the catalytic core - and a membrane F(1) domain - the membrane proton channel. These two domains are linked by a central stalk rotating inside the F(1) region and a stationary peripheral stalk. During catalysis, ATP synthesis in the catalytic domain of F(1) is coupled via a rotary mechanism of the central stalk subunits to proton translocation. With the subunit c (ATP5MC1), forms the proton-conducting channel in the F(0) domain, that contains two crucial half-channels (inlet and outlet) that facilitate proton movement from the mitochondrial intermembrane space (IMS) into the matrix. Protons are taken up via the inlet half-channel and released through the outlet half-channel, following a Grotthuss mechanism.</text>
</comment>
<comment type="catalytic activity">
    <reaction evidence="1">
        <text>H(+)(in) = H(+)(out)</text>
        <dbReference type="Rhea" id="RHEA:34979"/>
        <dbReference type="ChEBI" id="CHEBI:15378"/>
    </reaction>
</comment>
<comment type="subunit">
    <text evidence="1">Component of the ATP synthase complex composed at least of ATP5F1A/subunit alpha, ATP5F1B/subunit beta, ATP5MC1/subunit c (homooctomer), MT-ATP6/subunit a, MT-ATP8/subunit 8, ATP5ME/subunit e, ATP5MF/subunit f, ATP5MG/subunit g, ATP5MK/subunit k, ATP5MJ/subunit j, ATP5F1C/subunit gamma, ATP5F1D/subunit delta, ATP5F1E/subunit epsilon, ATP5PF/subunit F6, ATP5PB/subunit b, ATP5PD/subunit d, ATP5PO/subunit OSCP. ATP synthase complex consists of a soluble F(1) head domain (subunits alpha(3) and beta(3)) - the catalytic core - and a membrane F(0) domain - the membrane proton channel (subunits c, a, 8, e, f, g, k and j). These two domains are linked by a central stalk (subunits gamma, delta, and epsilon) rotating inside the F1 region and a stationary peripheral stalk (subunits F6, b, d, and OSCP). Interacts with DNAJC30; interaction is direct.</text>
</comment>
<comment type="subcellular location">
    <subcellularLocation>
        <location>Mitochondrion inner membrane</location>
        <topology>Multi-pass membrane protein</topology>
    </subcellularLocation>
</comment>
<comment type="similarity">
    <text evidence="3">Belongs to the ATPase A chain family.</text>
</comment>
<geneLocation type="mitochondrion"/>
<proteinExistence type="inferred from homology"/>
<feature type="chain" id="PRO_0000082122" description="ATP synthase F(0) complex subunit a">
    <location>
        <begin position="1"/>
        <end position="227"/>
    </location>
</feature>
<feature type="transmembrane region" description="Helical" evidence="2">
    <location>
        <begin position="14"/>
        <end position="34"/>
    </location>
</feature>
<feature type="transmembrane region" description="Helical" evidence="2">
    <location>
        <begin position="73"/>
        <end position="93"/>
    </location>
</feature>
<feature type="transmembrane region" description="Helical" evidence="2">
    <location>
        <begin position="98"/>
        <end position="118"/>
    </location>
</feature>
<feature type="transmembrane region" description="Helical" evidence="2">
    <location>
        <begin position="137"/>
        <end position="157"/>
    </location>
</feature>
<feature type="transmembrane region" description="Helical" evidence="2">
    <location>
        <begin position="179"/>
        <end position="199"/>
    </location>
</feature>
<feature type="transmembrane region" description="Helical" evidence="2">
    <location>
        <begin position="203"/>
        <end position="223"/>
    </location>
</feature>
<accession>P55778</accession>
<evidence type="ECO:0000250" key="1">
    <source>
        <dbReference type="UniProtKB" id="P00846"/>
    </source>
</evidence>
<evidence type="ECO:0000255" key="2"/>
<evidence type="ECO:0000305" key="3"/>
<reference key="1">
    <citation type="journal article" date="1996" name="Mol. Mar. Biol. Biotechnol.">
        <title>The complete mitochondrial DNA sequence of Atlantic cod (Gadus morhua): relevance to taxonomic studies among codfishes.</title>
        <authorList>
            <person name="Johansen S."/>
            <person name="Bakke I."/>
        </authorList>
    </citation>
    <scope>NUCLEOTIDE SEQUENCE [GENOMIC DNA]</scope>
    <source>
        <strain>Norwegian coastal 1</strain>
    </source>
</reference>
<sequence length="227" mass="25050">MTLSLFDQFSSPSFLGIPMILMALALPWLLIPTPTSRWLSNRVVSLQGWFIARFTNQLFLPLNVGGHKWAPLLASLMMFLLTLNMLGLMPYIFTPTTQLSLNLGLAVPLWLATVLIGMRNQPTHALGHFLPEGTPTALIPILIIMQTISLFIRPLALGVRLTANLTAGHLLIHLISSAVFVLMPMMPVVAILTAVLLLLLTMLEVAVAMIQAYVFILLLSLYLQENV</sequence>
<name>ATP6_GADMO</name>